<name>RLMM_ECO27</name>
<comment type="function">
    <text evidence="1">Catalyzes the 2'-O-methylation at nucleotide C2498 in 23S rRNA.</text>
</comment>
<comment type="catalytic activity">
    <reaction evidence="1">
        <text>cytidine(2498) in 23S rRNA + S-adenosyl-L-methionine = 2'-O-methylcytidine(2498) in 23S rRNA + S-adenosyl-L-homocysteine + H(+)</text>
        <dbReference type="Rhea" id="RHEA:42788"/>
        <dbReference type="Rhea" id="RHEA-COMP:10244"/>
        <dbReference type="Rhea" id="RHEA-COMP:10245"/>
        <dbReference type="ChEBI" id="CHEBI:15378"/>
        <dbReference type="ChEBI" id="CHEBI:57856"/>
        <dbReference type="ChEBI" id="CHEBI:59789"/>
        <dbReference type="ChEBI" id="CHEBI:74495"/>
        <dbReference type="ChEBI" id="CHEBI:82748"/>
        <dbReference type="EC" id="2.1.1.186"/>
    </reaction>
</comment>
<comment type="subunit">
    <text evidence="1">Monomer.</text>
</comment>
<comment type="subcellular location">
    <subcellularLocation>
        <location evidence="1">Cytoplasm</location>
    </subcellularLocation>
</comment>
<comment type="similarity">
    <text evidence="1">Belongs to the class I-like SAM-binding methyltransferase superfamily. RNA methyltransferase RlmE family. RlmM subfamily.</text>
</comment>
<organism>
    <name type="scientific">Escherichia coli O127:H6 (strain E2348/69 / EPEC)</name>
    <dbReference type="NCBI Taxonomy" id="574521"/>
    <lineage>
        <taxon>Bacteria</taxon>
        <taxon>Pseudomonadati</taxon>
        <taxon>Pseudomonadota</taxon>
        <taxon>Gammaproteobacteria</taxon>
        <taxon>Enterobacterales</taxon>
        <taxon>Enterobacteriaceae</taxon>
        <taxon>Escherichia</taxon>
    </lineage>
</organism>
<keyword id="KW-0963">Cytoplasm</keyword>
<keyword id="KW-0489">Methyltransferase</keyword>
<keyword id="KW-1185">Reference proteome</keyword>
<keyword id="KW-0698">rRNA processing</keyword>
<keyword id="KW-0949">S-adenosyl-L-methionine</keyword>
<keyword id="KW-0808">Transferase</keyword>
<reference key="1">
    <citation type="journal article" date="2009" name="J. Bacteriol.">
        <title>Complete genome sequence and comparative genome analysis of enteropathogenic Escherichia coli O127:H6 strain E2348/69.</title>
        <authorList>
            <person name="Iguchi A."/>
            <person name="Thomson N.R."/>
            <person name="Ogura Y."/>
            <person name="Saunders D."/>
            <person name="Ooka T."/>
            <person name="Henderson I.R."/>
            <person name="Harris D."/>
            <person name="Asadulghani M."/>
            <person name="Kurokawa K."/>
            <person name="Dean P."/>
            <person name="Kenny B."/>
            <person name="Quail M.A."/>
            <person name="Thurston S."/>
            <person name="Dougan G."/>
            <person name="Hayashi T."/>
            <person name="Parkhill J."/>
            <person name="Frankel G."/>
        </authorList>
    </citation>
    <scope>NUCLEOTIDE SEQUENCE [LARGE SCALE GENOMIC DNA]</scope>
    <source>
        <strain>E2348/69 / EPEC</strain>
    </source>
</reference>
<dbReference type="EC" id="2.1.1.186" evidence="1"/>
<dbReference type="EMBL" id="FM180568">
    <property type="protein sequence ID" value="CAS10621.1"/>
    <property type="molecule type" value="Genomic_DNA"/>
</dbReference>
<dbReference type="RefSeq" id="WP_001045530.1">
    <property type="nucleotide sequence ID" value="NC_011601.1"/>
</dbReference>
<dbReference type="SMR" id="B7UHM2"/>
<dbReference type="KEGG" id="ecg:E2348C_3073"/>
<dbReference type="HOGENOM" id="CLU_043780_0_0_6"/>
<dbReference type="Proteomes" id="UP000008205">
    <property type="component" value="Chromosome"/>
</dbReference>
<dbReference type="GO" id="GO:0005737">
    <property type="term" value="C:cytoplasm"/>
    <property type="evidence" value="ECO:0007669"/>
    <property type="project" value="UniProtKB-SubCell"/>
</dbReference>
<dbReference type="GO" id="GO:0008757">
    <property type="term" value="F:S-adenosylmethionine-dependent methyltransferase activity"/>
    <property type="evidence" value="ECO:0007669"/>
    <property type="project" value="UniProtKB-UniRule"/>
</dbReference>
<dbReference type="GO" id="GO:0032259">
    <property type="term" value="P:methylation"/>
    <property type="evidence" value="ECO:0007669"/>
    <property type="project" value="UniProtKB-KW"/>
</dbReference>
<dbReference type="GO" id="GO:0006364">
    <property type="term" value="P:rRNA processing"/>
    <property type="evidence" value="ECO:0007669"/>
    <property type="project" value="UniProtKB-UniRule"/>
</dbReference>
<dbReference type="FunFam" id="3.30.2300.20:FF:000001">
    <property type="entry name" value="Ribosomal RNA large subunit methyltransferase M"/>
    <property type="match status" value="1"/>
</dbReference>
<dbReference type="FunFam" id="3.30.70.2810:FF:000001">
    <property type="entry name" value="Ribosomal RNA large subunit methyltransferase M"/>
    <property type="match status" value="1"/>
</dbReference>
<dbReference type="FunFam" id="3.40.50.150:FF:000020">
    <property type="entry name" value="Ribosomal RNA large subunit methyltransferase M"/>
    <property type="match status" value="1"/>
</dbReference>
<dbReference type="Gene3D" id="3.30.2300.20">
    <property type="match status" value="1"/>
</dbReference>
<dbReference type="Gene3D" id="3.30.70.2810">
    <property type="match status" value="1"/>
</dbReference>
<dbReference type="Gene3D" id="3.40.50.150">
    <property type="entry name" value="Vaccinia Virus protein VP39"/>
    <property type="match status" value="1"/>
</dbReference>
<dbReference type="HAMAP" id="MF_01551">
    <property type="entry name" value="23SrRNA_methyltr_M"/>
    <property type="match status" value="1"/>
</dbReference>
<dbReference type="InterPro" id="IPR040739">
    <property type="entry name" value="RlmM_FDX"/>
</dbReference>
<dbReference type="InterPro" id="IPR048646">
    <property type="entry name" value="RlmM_THUMP-like"/>
</dbReference>
<dbReference type="InterPro" id="IPR002877">
    <property type="entry name" value="RNA_MeTrfase_FtsJ_dom"/>
</dbReference>
<dbReference type="InterPro" id="IPR011224">
    <property type="entry name" value="rRNA_MeTrfase_M"/>
</dbReference>
<dbReference type="InterPro" id="IPR029063">
    <property type="entry name" value="SAM-dependent_MTases_sf"/>
</dbReference>
<dbReference type="NCBIfam" id="NF008734">
    <property type="entry name" value="PRK11760.1"/>
    <property type="match status" value="1"/>
</dbReference>
<dbReference type="PANTHER" id="PTHR37524">
    <property type="entry name" value="RIBOSOMAL RNA LARGE SUBUNIT METHYLTRANSFERASE M"/>
    <property type="match status" value="1"/>
</dbReference>
<dbReference type="PANTHER" id="PTHR37524:SF2">
    <property type="entry name" value="RIBOSOMAL RNA METHYLTRANSFERASE FTSJ DOMAIN-CONTAINING PROTEIN"/>
    <property type="match status" value="1"/>
</dbReference>
<dbReference type="Pfam" id="PF01728">
    <property type="entry name" value="FtsJ"/>
    <property type="match status" value="1"/>
</dbReference>
<dbReference type="Pfam" id="PF18125">
    <property type="entry name" value="RlmM_FDX"/>
    <property type="match status" value="1"/>
</dbReference>
<dbReference type="Pfam" id="PF21239">
    <property type="entry name" value="RLMM_N"/>
    <property type="match status" value="1"/>
</dbReference>
<dbReference type="PIRSF" id="PIRSF028774">
    <property type="entry name" value="UCP028774"/>
    <property type="match status" value="1"/>
</dbReference>
<dbReference type="SUPFAM" id="SSF53335">
    <property type="entry name" value="S-adenosyl-L-methionine-dependent methyltransferases"/>
    <property type="match status" value="1"/>
</dbReference>
<gene>
    <name evidence="1" type="primary">rlmM</name>
    <name type="ordered locus">E2348C_3073</name>
</gene>
<sequence length="366" mass="41878">MNKVVLLCRPGFEKECAAEITDKAGQREIFGFARVKENAGYVIYECYQPDDGDKLIRELPFSSLIFARQWFVVGELLQHLPPEDRITPIVGMLQGVVEKGGELRVEVADTNESKELLKFCRKFTVPLRAALRDAGVLANYETPKRPVVHVFFIAPGCCYTGYSYSSNNSPFYMGIPRLKFPADAPSRSTLKLEEAFHVFIPADEWDERLANGMWAVDLGACPGGWTYQLVKRNMWVYSVDNGPMAQSLMDTGQVTWLREDGFKFRPTRSNISWMVCDMVEKPAKVAALMAQWLVNGWCRETIFNLKLPMKKRYEEVSHNLAYIQAQLDEHGINAQIQARQLYHDREEVTVHVRRIWAAVGGRRDER</sequence>
<accession>B7UHM2</accession>
<evidence type="ECO:0000255" key="1">
    <source>
        <dbReference type="HAMAP-Rule" id="MF_01551"/>
    </source>
</evidence>
<proteinExistence type="inferred from homology"/>
<protein>
    <recommendedName>
        <fullName evidence="1">Ribosomal RNA large subunit methyltransferase M</fullName>
        <ecNumber evidence="1">2.1.1.186</ecNumber>
    </recommendedName>
    <alternativeName>
        <fullName evidence="1">23S rRNA (cytidine2498-2'-O)-methyltransferase</fullName>
    </alternativeName>
    <alternativeName>
        <fullName evidence="1">23S rRNA 2'-O-ribose methyltransferase RlmM</fullName>
    </alternativeName>
</protein>
<feature type="chain" id="PRO_1000185318" description="Ribosomal RNA large subunit methyltransferase M">
    <location>
        <begin position="1"/>
        <end position="366"/>
    </location>
</feature>
<feature type="active site" description="Proton acceptor" evidence="1">
    <location>
        <position position="306"/>
    </location>
</feature>
<feature type="binding site" evidence="1">
    <location>
        <position position="188"/>
    </location>
    <ligand>
        <name>S-adenosyl-L-methionine</name>
        <dbReference type="ChEBI" id="CHEBI:59789"/>
    </ligand>
</feature>
<feature type="binding site" evidence="1">
    <location>
        <begin position="221"/>
        <end position="224"/>
    </location>
    <ligand>
        <name>S-adenosyl-L-methionine</name>
        <dbReference type="ChEBI" id="CHEBI:59789"/>
    </ligand>
</feature>
<feature type="binding site" evidence="1">
    <location>
        <position position="240"/>
    </location>
    <ligand>
        <name>S-adenosyl-L-methionine</name>
        <dbReference type="ChEBI" id="CHEBI:59789"/>
    </ligand>
</feature>
<feature type="binding site" evidence="1">
    <location>
        <position position="260"/>
    </location>
    <ligand>
        <name>S-adenosyl-L-methionine</name>
        <dbReference type="ChEBI" id="CHEBI:59789"/>
    </ligand>
</feature>
<feature type="binding site" evidence="1">
    <location>
        <position position="277"/>
    </location>
    <ligand>
        <name>S-adenosyl-L-methionine</name>
        <dbReference type="ChEBI" id="CHEBI:59789"/>
    </ligand>
</feature>